<feature type="chain" id="PRO_0000124401" description="Small ribosomal subunit protein uS7">
    <location>
        <begin position="1"/>
        <end position="189"/>
    </location>
</feature>
<evidence type="ECO:0000255" key="1">
    <source>
        <dbReference type="HAMAP-Rule" id="MF_00480"/>
    </source>
</evidence>
<evidence type="ECO:0000305" key="2"/>
<dbReference type="EMBL" id="AE008384">
    <property type="protein sequence ID" value="AAM31962.1"/>
    <property type="molecule type" value="Genomic_DNA"/>
</dbReference>
<dbReference type="RefSeq" id="WP_011034193.1">
    <property type="nucleotide sequence ID" value="NC_003901.1"/>
</dbReference>
<dbReference type="SMR" id="Q8PUR6"/>
<dbReference type="KEGG" id="mma:MM_2266"/>
<dbReference type="PATRIC" id="fig|192952.21.peg.2596"/>
<dbReference type="eggNOG" id="arCOG04254">
    <property type="taxonomic scope" value="Archaea"/>
</dbReference>
<dbReference type="HOGENOM" id="CLU_063975_0_0_2"/>
<dbReference type="Proteomes" id="UP000000595">
    <property type="component" value="Chromosome"/>
</dbReference>
<dbReference type="GO" id="GO:0015935">
    <property type="term" value="C:small ribosomal subunit"/>
    <property type="evidence" value="ECO:0007669"/>
    <property type="project" value="InterPro"/>
</dbReference>
<dbReference type="GO" id="GO:0019843">
    <property type="term" value="F:rRNA binding"/>
    <property type="evidence" value="ECO:0007669"/>
    <property type="project" value="UniProtKB-UniRule"/>
</dbReference>
<dbReference type="GO" id="GO:0003735">
    <property type="term" value="F:structural constituent of ribosome"/>
    <property type="evidence" value="ECO:0007669"/>
    <property type="project" value="InterPro"/>
</dbReference>
<dbReference type="GO" id="GO:0006412">
    <property type="term" value="P:translation"/>
    <property type="evidence" value="ECO:0007669"/>
    <property type="project" value="UniProtKB-UniRule"/>
</dbReference>
<dbReference type="CDD" id="cd14867">
    <property type="entry name" value="uS7_Eukaryote"/>
    <property type="match status" value="1"/>
</dbReference>
<dbReference type="FunFam" id="1.10.455.10:FF:000016">
    <property type="entry name" value="30S ribosomal protein S7"/>
    <property type="match status" value="1"/>
</dbReference>
<dbReference type="Gene3D" id="1.10.455.10">
    <property type="entry name" value="Ribosomal protein S7 domain"/>
    <property type="match status" value="1"/>
</dbReference>
<dbReference type="HAMAP" id="MF_00480_A">
    <property type="entry name" value="Ribosomal_uS7_A"/>
    <property type="match status" value="1"/>
</dbReference>
<dbReference type="InterPro" id="IPR000235">
    <property type="entry name" value="Ribosomal_uS7"/>
</dbReference>
<dbReference type="InterPro" id="IPR026018">
    <property type="entry name" value="Ribosomal_uS7_arc"/>
</dbReference>
<dbReference type="InterPro" id="IPR023798">
    <property type="entry name" value="Ribosomal_uS7_dom"/>
</dbReference>
<dbReference type="InterPro" id="IPR036823">
    <property type="entry name" value="Ribosomal_uS7_dom_sf"/>
</dbReference>
<dbReference type="InterPro" id="IPR005716">
    <property type="entry name" value="Ribosomal_uS7_euk/arc"/>
</dbReference>
<dbReference type="NCBIfam" id="NF003106">
    <property type="entry name" value="PRK04027.1"/>
    <property type="match status" value="1"/>
</dbReference>
<dbReference type="NCBIfam" id="TIGR01028">
    <property type="entry name" value="uS7_euk_arch"/>
    <property type="match status" value="1"/>
</dbReference>
<dbReference type="PANTHER" id="PTHR11205">
    <property type="entry name" value="RIBOSOMAL PROTEIN S7"/>
    <property type="match status" value="1"/>
</dbReference>
<dbReference type="Pfam" id="PF00177">
    <property type="entry name" value="Ribosomal_S7"/>
    <property type="match status" value="1"/>
</dbReference>
<dbReference type="PIRSF" id="PIRSF002122">
    <property type="entry name" value="RPS7p_RPS7a_RPS5e_RPS7o"/>
    <property type="match status" value="1"/>
</dbReference>
<dbReference type="SUPFAM" id="SSF47973">
    <property type="entry name" value="Ribosomal protein S7"/>
    <property type="match status" value="1"/>
</dbReference>
<name>RS7_METMA</name>
<keyword id="KW-0687">Ribonucleoprotein</keyword>
<keyword id="KW-0689">Ribosomal protein</keyword>
<keyword id="KW-0694">RNA-binding</keyword>
<keyword id="KW-0699">rRNA-binding</keyword>
<accession>Q8PUR6</accession>
<comment type="function">
    <text evidence="1">One of the primary rRNA binding proteins, it binds directly to 16S rRNA where it nucleates assembly of the head domain of the 30S subunit. Is located at the subunit interface close to the decoding center.</text>
</comment>
<comment type="subunit">
    <text evidence="1">Part of the 30S ribosomal subunit.</text>
</comment>
<comment type="similarity">
    <text evidence="1">Belongs to the universal ribosomal protein uS7 family.</text>
</comment>
<organism>
    <name type="scientific">Methanosarcina mazei (strain ATCC BAA-159 / DSM 3647 / Goe1 / Go1 / JCM 11833 / OCM 88)</name>
    <name type="common">Methanosarcina frisia</name>
    <dbReference type="NCBI Taxonomy" id="192952"/>
    <lineage>
        <taxon>Archaea</taxon>
        <taxon>Methanobacteriati</taxon>
        <taxon>Methanobacteriota</taxon>
        <taxon>Stenosarchaea group</taxon>
        <taxon>Methanomicrobia</taxon>
        <taxon>Methanosarcinales</taxon>
        <taxon>Methanosarcinaceae</taxon>
        <taxon>Methanosarcina</taxon>
    </lineage>
</organism>
<proteinExistence type="inferred from homology"/>
<sequence length="189" mass="21080">MIFLYKIFGKWDPTEVEVRDLGIKRYVSLAPVIVPHSSGKHARQQFNKSEISIVERLANNLMRTETNTGKKQVTLRAVEEAFDIINRKTQQNPIQILVDAIANAGPREEVVRLKYGGISVPKAVDTAPQRRVDTALRYISMGTNAAAFKSKRSVAECLATELIGAANRDTKSFSINRKDAKERVAKAAR</sequence>
<reference key="1">
    <citation type="journal article" date="2002" name="J. Mol. Microbiol. Biotechnol.">
        <title>The genome of Methanosarcina mazei: evidence for lateral gene transfer between Bacteria and Archaea.</title>
        <authorList>
            <person name="Deppenmeier U."/>
            <person name="Johann A."/>
            <person name="Hartsch T."/>
            <person name="Merkl R."/>
            <person name="Schmitz R.A."/>
            <person name="Martinez-Arias R."/>
            <person name="Henne A."/>
            <person name="Wiezer A."/>
            <person name="Baeumer S."/>
            <person name="Jacobi C."/>
            <person name="Brueggemann H."/>
            <person name="Lienard T."/>
            <person name="Christmann A."/>
            <person name="Boemecke M."/>
            <person name="Steckel S."/>
            <person name="Bhattacharyya A."/>
            <person name="Lykidis A."/>
            <person name="Overbeek R."/>
            <person name="Klenk H.-P."/>
            <person name="Gunsalus R.P."/>
            <person name="Fritz H.-J."/>
            <person name="Gottschalk G."/>
        </authorList>
    </citation>
    <scope>NUCLEOTIDE SEQUENCE [LARGE SCALE GENOMIC DNA]</scope>
    <source>
        <strain>ATCC BAA-159 / DSM 3647 / Goe1 / Go1 / JCM 11833 / OCM 88</strain>
    </source>
</reference>
<protein>
    <recommendedName>
        <fullName evidence="1">Small ribosomal subunit protein uS7</fullName>
    </recommendedName>
    <alternativeName>
        <fullName evidence="2">30S ribosomal protein S7</fullName>
    </alternativeName>
</protein>
<gene>
    <name evidence="1" type="primary">rps7</name>
    <name type="ordered locus">MM_2266</name>
</gene>